<organism>
    <name type="scientific">Methanospirillum hungatei JF-1 (strain ATCC 27890 / DSM 864 / NBRC 100397 / JF-1)</name>
    <dbReference type="NCBI Taxonomy" id="323259"/>
    <lineage>
        <taxon>Archaea</taxon>
        <taxon>Methanobacteriati</taxon>
        <taxon>Methanobacteriota</taxon>
        <taxon>Stenosarchaea group</taxon>
        <taxon>Methanomicrobia</taxon>
        <taxon>Methanomicrobiales</taxon>
        <taxon>Methanospirillaceae</taxon>
        <taxon>Methanospirillum</taxon>
    </lineage>
</organism>
<accession>Q2FT96</accession>
<evidence type="ECO:0000255" key="1">
    <source>
        <dbReference type="HAMAP-Rule" id="MF_01315"/>
    </source>
</evidence>
<evidence type="ECO:0000305" key="2"/>
<sequence>MAQDDQEINYFVRVHNTDLDGTKPVLISLTGIKGVGRHTAKFIAETAGVEKNVLMGKLDEASVDRIREVVSNYADRIPVWMSNRPKDVYTGVKRHLLGADVTMTVDDDINLLKKIRAYRGIRHETGQKVRGQRTKSTGRTGLIVGVKRKKA</sequence>
<reference key="1">
    <citation type="journal article" date="2016" name="Stand. Genomic Sci.">
        <title>Complete genome sequence of Methanospirillum hungatei type strain JF1.</title>
        <authorList>
            <person name="Gunsalus R.P."/>
            <person name="Cook L.E."/>
            <person name="Crable B."/>
            <person name="Rohlin L."/>
            <person name="McDonald E."/>
            <person name="Mouttaki H."/>
            <person name="Sieber J.R."/>
            <person name="Poweleit N."/>
            <person name="Zhou H."/>
            <person name="Lapidus A.L."/>
            <person name="Daligault H.E."/>
            <person name="Land M."/>
            <person name="Gilna P."/>
            <person name="Ivanova N."/>
            <person name="Kyrpides N."/>
            <person name="Culley D.E."/>
            <person name="McInerney M.J."/>
        </authorList>
    </citation>
    <scope>NUCLEOTIDE SEQUENCE [LARGE SCALE GENOMIC DNA]</scope>
    <source>
        <strain>ATCC 27890 / DSM 864 / NBRC 100397 / JF-1</strain>
    </source>
</reference>
<keyword id="KW-1185">Reference proteome</keyword>
<keyword id="KW-0687">Ribonucleoprotein</keyword>
<keyword id="KW-0689">Ribosomal protein</keyword>
<keyword id="KW-0694">RNA-binding</keyword>
<keyword id="KW-0699">rRNA-binding</keyword>
<feature type="chain" id="PRO_0000306759" description="Small ribosomal subunit protein uS13">
    <location>
        <begin position="1"/>
        <end position="151"/>
    </location>
</feature>
<gene>
    <name evidence="1" type="primary">rps13</name>
    <name type="ordered locus">Mhun_2902</name>
</gene>
<proteinExistence type="inferred from homology"/>
<dbReference type="EMBL" id="CP000254">
    <property type="protein sequence ID" value="ABD42594.1"/>
    <property type="molecule type" value="Genomic_DNA"/>
</dbReference>
<dbReference type="RefSeq" id="WP_011449847.1">
    <property type="nucleotide sequence ID" value="NC_007796.1"/>
</dbReference>
<dbReference type="SMR" id="Q2FT96"/>
<dbReference type="FunCoup" id="Q2FT96">
    <property type="interactions" value="181"/>
</dbReference>
<dbReference type="STRING" id="323259.Mhun_2902"/>
<dbReference type="EnsemblBacteria" id="ABD42594">
    <property type="protein sequence ID" value="ABD42594"/>
    <property type="gene ID" value="Mhun_2902"/>
</dbReference>
<dbReference type="GeneID" id="3924851"/>
<dbReference type="KEGG" id="mhu:Mhun_2902"/>
<dbReference type="eggNOG" id="arCOG01722">
    <property type="taxonomic scope" value="Archaea"/>
</dbReference>
<dbReference type="HOGENOM" id="CLU_103849_0_1_2"/>
<dbReference type="InParanoid" id="Q2FT96"/>
<dbReference type="OrthoDB" id="372127at2157"/>
<dbReference type="Proteomes" id="UP000001941">
    <property type="component" value="Chromosome"/>
</dbReference>
<dbReference type="GO" id="GO:0005829">
    <property type="term" value="C:cytosol"/>
    <property type="evidence" value="ECO:0007669"/>
    <property type="project" value="TreeGrafter"/>
</dbReference>
<dbReference type="GO" id="GO:0015935">
    <property type="term" value="C:small ribosomal subunit"/>
    <property type="evidence" value="ECO:0007669"/>
    <property type="project" value="TreeGrafter"/>
</dbReference>
<dbReference type="GO" id="GO:0019843">
    <property type="term" value="F:rRNA binding"/>
    <property type="evidence" value="ECO:0007669"/>
    <property type="project" value="UniProtKB-UniRule"/>
</dbReference>
<dbReference type="GO" id="GO:0003735">
    <property type="term" value="F:structural constituent of ribosome"/>
    <property type="evidence" value="ECO:0007669"/>
    <property type="project" value="InterPro"/>
</dbReference>
<dbReference type="GO" id="GO:0006412">
    <property type="term" value="P:translation"/>
    <property type="evidence" value="ECO:0007669"/>
    <property type="project" value="UniProtKB-UniRule"/>
</dbReference>
<dbReference type="FunFam" id="1.10.8.50:FF:000001">
    <property type="entry name" value="30S ribosomal protein S13"/>
    <property type="match status" value="1"/>
</dbReference>
<dbReference type="FunFam" id="4.10.910.10:FF:000002">
    <property type="entry name" value="40S ribosomal protein S18"/>
    <property type="match status" value="1"/>
</dbReference>
<dbReference type="Gene3D" id="1.10.8.50">
    <property type="match status" value="1"/>
</dbReference>
<dbReference type="Gene3D" id="4.10.910.10">
    <property type="entry name" value="30s ribosomal protein s13, domain 2"/>
    <property type="match status" value="1"/>
</dbReference>
<dbReference type="HAMAP" id="MF_01315">
    <property type="entry name" value="Ribosomal_uS13"/>
    <property type="match status" value="1"/>
</dbReference>
<dbReference type="InterPro" id="IPR027437">
    <property type="entry name" value="Rbsml_uS13_C"/>
</dbReference>
<dbReference type="InterPro" id="IPR001892">
    <property type="entry name" value="Ribosomal_uS13"/>
</dbReference>
<dbReference type="InterPro" id="IPR010979">
    <property type="entry name" value="Ribosomal_uS13-like_H2TH"/>
</dbReference>
<dbReference type="InterPro" id="IPR019977">
    <property type="entry name" value="Ribosomal_uS13_archaeal"/>
</dbReference>
<dbReference type="InterPro" id="IPR018269">
    <property type="entry name" value="Ribosomal_uS13_CS"/>
</dbReference>
<dbReference type="NCBIfam" id="NF003140">
    <property type="entry name" value="PRK04053.1"/>
    <property type="match status" value="1"/>
</dbReference>
<dbReference type="NCBIfam" id="TIGR03629">
    <property type="entry name" value="uS13_arch"/>
    <property type="match status" value="1"/>
</dbReference>
<dbReference type="PANTHER" id="PTHR10871">
    <property type="entry name" value="30S RIBOSOMAL PROTEIN S13/40S RIBOSOMAL PROTEIN S18"/>
    <property type="match status" value="1"/>
</dbReference>
<dbReference type="PANTHER" id="PTHR10871:SF3">
    <property type="entry name" value="SMALL RIBOSOMAL SUBUNIT PROTEIN US13"/>
    <property type="match status" value="1"/>
</dbReference>
<dbReference type="Pfam" id="PF00416">
    <property type="entry name" value="Ribosomal_S13"/>
    <property type="match status" value="1"/>
</dbReference>
<dbReference type="PIRSF" id="PIRSF002134">
    <property type="entry name" value="Ribosomal_S13"/>
    <property type="match status" value="1"/>
</dbReference>
<dbReference type="SUPFAM" id="SSF46946">
    <property type="entry name" value="S13-like H2TH domain"/>
    <property type="match status" value="1"/>
</dbReference>
<dbReference type="PROSITE" id="PS00646">
    <property type="entry name" value="RIBOSOMAL_S13_1"/>
    <property type="match status" value="1"/>
</dbReference>
<dbReference type="PROSITE" id="PS50159">
    <property type="entry name" value="RIBOSOMAL_S13_2"/>
    <property type="match status" value="1"/>
</dbReference>
<comment type="function">
    <text evidence="1">Located at the top of the head of the 30S subunit, it contacts several helices of the 16S rRNA. In the 70S ribosome it contacts the 23S rRNA (bridge B1a) and protein L5 of the 50S subunit (bridge B1b), connecting the 2 subunits; these bridges are implicated in subunit movement.</text>
</comment>
<comment type="subunit">
    <text evidence="1">Part of the 30S ribosomal subunit. Forms a loose heterodimer with protein S19. Forms two bridges to the 50S subunit in the 70S ribosome.</text>
</comment>
<comment type="similarity">
    <text evidence="1">Belongs to the universal ribosomal protein uS13 family.</text>
</comment>
<protein>
    <recommendedName>
        <fullName evidence="1">Small ribosomal subunit protein uS13</fullName>
    </recommendedName>
    <alternativeName>
        <fullName evidence="2">30S ribosomal protein S13</fullName>
    </alternativeName>
</protein>
<name>RS13_METHJ</name>